<feature type="chain" id="PRO_0000153283" description="Lengsin">
    <location>
        <begin position="1"/>
        <end position="563"/>
    </location>
</feature>
<feature type="domain" description="GS beta-grasp" evidence="1">
    <location>
        <begin position="137"/>
        <end position="231"/>
    </location>
</feature>
<feature type="domain" description="GS catalytic" evidence="2">
    <location>
        <begin position="238"/>
        <end position="563"/>
    </location>
</feature>
<feature type="region of interest" description="Disordered" evidence="3">
    <location>
        <begin position="1"/>
        <end position="115"/>
    </location>
</feature>
<feature type="compositionally biased region" description="Basic residues" evidence="3">
    <location>
        <begin position="26"/>
        <end position="37"/>
    </location>
</feature>
<feature type="compositionally biased region" description="Polar residues" evidence="3">
    <location>
        <begin position="51"/>
        <end position="62"/>
    </location>
</feature>
<feature type="compositionally biased region" description="Polar residues" evidence="3">
    <location>
        <begin position="105"/>
        <end position="115"/>
    </location>
</feature>
<proteinExistence type="evidence at protein level"/>
<comment type="function">
    <text evidence="5">May act as a component of the cytoskeleton or as a chaperone for the reorganization of intermediate filament proteins during terminal differentiation in the lens. Does not seem to have enzymatic activity.</text>
</comment>
<comment type="subunit">
    <text evidence="4 5">Dodecamer. Interacts with BFSP2 and VIM.</text>
</comment>
<comment type="tissue specificity">
    <text evidence="5">Expressed in lens.</text>
</comment>
<comment type="similarity">
    <text evidence="6">Belongs to the glutamine synthetase family.</text>
</comment>
<evidence type="ECO:0000255" key="1">
    <source>
        <dbReference type="PROSITE-ProRule" id="PRU01330"/>
    </source>
</evidence>
<evidence type="ECO:0000255" key="2">
    <source>
        <dbReference type="PROSITE-ProRule" id="PRU01331"/>
    </source>
</evidence>
<evidence type="ECO:0000256" key="3">
    <source>
        <dbReference type="SAM" id="MobiDB-lite"/>
    </source>
</evidence>
<evidence type="ECO:0000269" key="4">
    <source>
    </source>
</evidence>
<evidence type="ECO:0000269" key="5">
    <source>
    </source>
</evidence>
<evidence type="ECO:0000305" key="6"/>
<gene>
    <name type="primary">Lgsn</name>
    <name type="synonym">Gluld1</name>
    <name type="synonym">Lgs</name>
</gene>
<accession>Q8CIX8</accession>
<accession>Q149K1</accession>
<protein>
    <recommendedName>
        <fullName>Lengsin</fullName>
    </recommendedName>
    <alternativeName>
        <fullName>Glutamate-ammonia ligase domain-containing protein 1</fullName>
    </alternativeName>
    <alternativeName>
        <fullName>Lens glutamine synthase-like</fullName>
    </alternativeName>
</protein>
<reference key="1">
    <citation type="submission" date="2002-09" db="EMBL/GenBank/DDBJ databases">
        <authorList>
            <person name="Wistow G."/>
            <person name="Wyatt K."/>
        </authorList>
    </citation>
    <scope>NUCLEOTIDE SEQUENCE [MRNA]</scope>
    <source>
        <strain>C57BL/6J</strain>
        <tissue>Eye</tissue>
    </source>
</reference>
<reference key="2">
    <citation type="journal article" date="2004" name="Genome Res.">
        <title>The status, quality, and expansion of the NIH full-length cDNA project: the Mammalian Gene Collection (MGC).</title>
        <authorList>
            <consortium name="The MGC Project Team"/>
        </authorList>
    </citation>
    <scope>NUCLEOTIDE SEQUENCE [LARGE SCALE MRNA]</scope>
</reference>
<reference key="3">
    <citation type="journal article" date="2008" name="J. Biol. Chem.">
        <title>A role for lengsin, a recruited enzyme, in terminal differentiation in the vertebrate lens.</title>
        <authorList>
            <person name="Wyatt K."/>
            <person name="Gao C."/>
            <person name="Tsai J.-Y."/>
            <person name="Fariss R.N."/>
            <person name="Ray S."/>
            <person name="Wistow G."/>
        </authorList>
    </citation>
    <scope>INTERACTION WITH BFSP2 AND VIM</scope>
    <scope>FUNCTION</scope>
    <scope>TISSUE SPECIFICITY</scope>
</reference>
<reference key="4">
    <citation type="journal article" date="2006" name="Structure">
        <title>Lengsin is a survivor of an ancient family of class I glutamine synthetases re-engineered by evolution for a role in the vertebrate lens.</title>
        <authorList>
            <person name="Wyatt K."/>
            <person name="White H.E."/>
            <person name="Wang L."/>
            <person name="Bateman O.A."/>
            <person name="Slingsby C."/>
            <person name="Orlova E.V."/>
            <person name="Wistow G."/>
        </authorList>
    </citation>
    <scope>STRUCTURE BY ELECTRON MICROSCOPY (17.0 ANGSTROMS) OF 141-563</scope>
    <scope>SUBUNIT</scope>
</reference>
<dbReference type="EMBL" id="AF545851">
    <property type="protein sequence ID" value="AAN38298.1"/>
    <property type="molecule type" value="mRNA"/>
</dbReference>
<dbReference type="EMBL" id="BC117745">
    <property type="protein sequence ID" value="AAI17746.1"/>
    <property type="molecule type" value="mRNA"/>
</dbReference>
<dbReference type="EMBL" id="BC117746">
    <property type="protein sequence ID" value="AAI17747.1"/>
    <property type="molecule type" value="mRNA"/>
</dbReference>
<dbReference type="EMBL" id="BC128067">
    <property type="protein sequence ID" value="AAI28068.1"/>
    <property type="molecule type" value="mRNA"/>
</dbReference>
<dbReference type="CCDS" id="CCDS14859.1"/>
<dbReference type="RefSeq" id="NP_705829.1">
    <property type="nucleotide sequence ID" value="NM_153601.1"/>
</dbReference>
<dbReference type="PDB" id="2J9I">
    <property type="method" value="EM"/>
    <property type="resolution" value="17.00 A"/>
    <property type="chains" value="A/B/C/D/E/F/G/H/I/J/K/L=141-563"/>
</dbReference>
<dbReference type="PDBsum" id="2J9I"/>
<dbReference type="EMDB" id="EMD-1290"/>
<dbReference type="SMR" id="Q8CIX8"/>
<dbReference type="DIP" id="DIP-29169N"/>
<dbReference type="FunCoup" id="Q8CIX8">
    <property type="interactions" value="103"/>
</dbReference>
<dbReference type="STRING" id="10090.ENSMUSP00000059871"/>
<dbReference type="PhosphoSitePlus" id="Q8CIX8"/>
<dbReference type="jPOST" id="Q8CIX8"/>
<dbReference type="PaxDb" id="10090-ENSMUSP00000059871"/>
<dbReference type="ProteomicsDB" id="290025"/>
<dbReference type="Antibodypedia" id="49358">
    <property type="antibodies" value="30 antibodies from 13 providers"/>
</dbReference>
<dbReference type="DNASU" id="266744"/>
<dbReference type="Ensembl" id="ENSMUST00000062560.14">
    <property type="protein sequence ID" value="ENSMUSP00000059871.8"/>
    <property type="gene ID" value="ENSMUSG00000050217.14"/>
</dbReference>
<dbReference type="GeneID" id="266744"/>
<dbReference type="KEGG" id="mmu:266744"/>
<dbReference type="UCSC" id="uc007ank.1">
    <property type="organism name" value="mouse"/>
</dbReference>
<dbReference type="AGR" id="MGI:2672844"/>
<dbReference type="CTD" id="51557"/>
<dbReference type="MGI" id="MGI:2672844">
    <property type="gene designation" value="Lgsn"/>
</dbReference>
<dbReference type="VEuPathDB" id="HostDB:ENSMUSG00000050217"/>
<dbReference type="eggNOG" id="KOG0683">
    <property type="taxonomic scope" value="Eukaryota"/>
</dbReference>
<dbReference type="GeneTree" id="ENSGT00390000013639"/>
<dbReference type="HOGENOM" id="CLU_017290_0_2_1"/>
<dbReference type="InParanoid" id="Q8CIX8"/>
<dbReference type="OMA" id="NIMTFRL"/>
<dbReference type="OrthoDB" id="77835at2759"/>
<dbReference type="PhylomeDB" id="Q8CIX8"/>
<dbReference type="TreeFam" id="TF331605"/>
<dbReference type="BioGRID-ORCS" id="266744">
    <property type="hits" value="4 hits in 78 CRISPR screens"/>
</dbReference>
<dbReference type="EvolutionaryTrace" id="Q8CIX8"/>
<dbReference type="PRO" id="PR:Q8CIX8"/>
<dbReference type="Proteomes" id="UP000000589">
    <property type="component" value="Chromosome 1"/>
</dbReference>
<dbReference type="RNAct" id="Q8CIX8">
    <property type="molecule type" value="protein"/>
</dbReference>
<dbReference type="Bgee" id="ENSMUSG00000050217">
    <property type="expression patterns" value="Expressed in lens of camera-type eye and 4 other cell types or tissues"/>
</dbReference>
<dbReference type="ExpressionAtlas" id="Q8CIX8">
    <property type="expression patterns" value="baseline and differential"/>
</dbReference>
<dbReference type="GO" id="GO:0005886">
    <property type="term" value="C:plasma membrane"/>
    <property type="evidence" value="ECO:0000314"/>
    <property type="project" value="MGI"/>
</dbReference>
<dbReference type="GO" id="GO:0004356">
    <property type="term" value="F:glutamine synthetase activity"/>
    <property type="evidence" value="ECO:0007669"/>
    <property type="project" value="InterPro"/>
</dbReference>
<dbReference type="GO" id="GO:0006542">
    <property type="term" value="P:glutamine biosynthetic process"/>
    <property type="evidence" value="ECO:0007669"/>
    <property type="project" value="InterPro"/>
</dbReference>
<dbReference type="FunFam" id="3.30.590.10:FF:000009">
    <property type="entry name" value="Lengsin, lens protein with glutamine synthetase domain"/>
    <property type="match status" value="1"/>
</dbReference>
<dbReference type="FunFam" id="3.10.20.70:FF:000007">
    <property type="entry name" value="LOW QUALITY PROTEIN: lengsin"/>
    <property type="match status" value="1"/>
</dbReference>
<dbReference type="Gene3D" id="3.10.20.70">
    <property type="entry name" value="Glutamine synthetase, N-terminal domain"/>
    <property type="match status" value="1"/>
</dbReference>
<dbReference type="Gene3D" id="3.30.590.10">
    <property type="entry name" value="Glutamine synthetase/guanido kinase, catalytic domain"/>
    <property type="match status" value="1"/>
</dbReference>
<dbReference type="InterPro" id="IPR008147">
    <property type="entry name" value="Gln_synt_N"/>
</dbReference>
<dbReference type="InterPro" id="IPR036651">
    <property type="entry name" value="Gln_synt_N_sf"/>
</dbReference>
<dbReference type="InterPro" id="IPR014746">
    <property type="entry name" value="Gln_synth/guanido_kin_cat_dom"/>
</dbReference>
<dbReference type="InterPro" id="IPR008146">
    <property type="entry name" value="Gln_synth_cat_dom"/>
</dbReference>
<dbReference type="PANTHER" id="PTHR43407">
    <property type="entry name" value="GLUTAMINE SYNTHETASE"/>
    <property type="match status" value="1"/>
</dbReference>
<dbReference type="PANTHER" id="PTHR43407:SF1">
    <property type="entry name" value="LENGSIN"/>
    <property type="match status" value="1"/>
</dbReference>
<dbReference type="Pfam" id="PF00120">
    <property type="entry name" value="Gln-synt_C"/>
    <property type="match status" value="1"/>
</dbReference>
<dbReference type="SMART" id="SM01230">
    <property type="entry name" value="Gln-synt_C"/>
    <property type="match status" value="1"/>
</dbReference>
<dbReference type="SUPFAM" id="SSF54368">
    <property type="entry name" value="Glutamine synthetase, N-terminal domain"/>
    <property type="match status" value="1"/>
</dbReference>
<dbReference type="SUPFAM" id="SSF55931">
    <property type="entry name" value="Glutamine synthetase/guanido kinase"/>
    <property type="match status" value="1"/>
</dbReference>
<dbReference type="PROSITE" id="PS51986">
    <property type="entry name" value="GS_BETA_GRASP"/>
    <property type="match status" value="1"/>
</dbReference>
<dbReference type="PROSITE" id="PS51987">
    <property type="entry name" value="GS_CATALYTIC"/>
    <property type="match status" value="1"/>
</dbReference>
<organism>
    <name type="scientific">Mus musculus</name>
    <name type="common">Mouse</name>
    <dbReference type="NCBI Taxonomy" id="10090"/>
    <lineage>
        <taxon>Eukaryota</taxon>
        <taxon>Metazoa</taxon>
        <taxon>Chordata</taxon>
        <taxon>Craniata</taxon>
        <taxon>Vertebrata</taxon>
        <taxon>Euteleostomi</taxon>
        <taxon>Mammalia</taxon>
        <taxon>Eutheria</taxon>
        <taxon>Euarchontoglires</taxon>
        <taxon>Glires</taxon>
        <taxon>Rodentia</taxon>
        <taxon>Myomorpha</taxon>
        <taxon>Muroidea</taxon>
        <taxon>Muridae</taxon>
        <taxon>Murinae</taxon>
        <taxon>Mus</taxon>
        <taxon>Mus</taxon>
    </lineage>
</organism>
<keyword id="KW-0002">3D-structure</keyword>
<keyword id="KW-1185">Reference proteome</keyword>
<sequence length="563" mass="62164">MTDEGDLAQEDTAKDEGNVTEGSRMSKLRRARRKVTKPHLCSMDGEEIAKANSSEMSRNQIADLSKPGSAESWSSHSAKDAYHPTPVVKPSLPSALAGAPDAEFSPNTDPTRYNAQSFNPPQLSARMKHIKQEMAKNHLQFVRFEATDLHGVSRSKSIPAQFFQEKVIHGVFMPRGYLELMPNPKDNEVNHIRATCFNSDIVLMPELSTFRVLPWAERTARVICDTFTVTGEPLLTSPRYIAKRQLRQLQDAGFCLLSAFIYDFCIFGVPEVINSKTISFPASTLLSNHDQPFMQELVEGLYQTGANVESFSSSTRPGQMEICFLPEFGISSADNAFTLRTGLQEVARRYNYIASLVIETGFCNSGILSHSIWDVGGKTNMFCSGSGVERLTLTGKKWLAGLLKHSAALSCLMAPAVNCRKRYCKDSRDLKDSVPTTWGYNDNSCALNIKCHGEKGTQIENKLGSATANPYLVLAATVAAGLDGLQSSDGAAAGSDESQDLYQPEPSEIPLKMEDALAALEQDECLKQALGETFIRYFVAMKKYELENEETDAEGNKFLEYFI</sequence>
<name>LGSN_MOUSE</name>